<sequence>MKLIVGIGGMTNGGKTTLTNSLLRALPNCCVIHQDDFFKPQDQIAVGEDGFKQWDVLESLDMEAMLDTVQAWLSSPQKFARAHGVSVQPEASDTHILLLEGFLLYSYKPLVDLYSRRYFLTVPYEECKWRRSTRNYTVPDPPGLFDGHVWPMYQKYRQEMEANGVEVVYLDGMKSREELFREVLEDIQNSLLNRSQESAPSPARPARTQGPGRGCGHRTARPAASQQDSM</sequence>
<keyword id="KW-0025">Alternative splicing</keyword>
<keyword id="KW-0067">ATP-binding</keyword>
<keyword id="KW-0418">Kinase</keyword>
<keyword id="KW-0460">Magnesium</keyword>
<keyword id="KW-0479">Metal-binding</keyword>
<keyword id="KW-0547">Nucleotide-binding</keyword>
<keyword id="KW-1267">Proteomics identification</keyword>
<keyword id="KW-0662">Pyridine nucleotide biosynthesis</keyword>
<keyword id="KW-1185">Reference proteome</keyword>
<keyword id="KW-0808">Transferase</keyword>
<dbReference type="EC" id="2.7.1.22" evidence="7"/>
<dbReference type="EC" id="2.7.1.173" evidence="7"/>
<dbReference type="EMBL" id="AF190819">
    <property type="protein sequence ID" value="AAF26711.1"/>
    <property type="status" value="ALT_SEQ"/>
    <property type="molecule type" value="mRNA"/>
</dbReference>
<dbReference type="EMBL" id="AY611481">
    <property type="protein sequence ID" value="AAT11929.1"/>
    <property type="molecule type" value="mRNA"/>
</dbReference>
<dbReference type="EMBL" id="AL365377">
    <property type="protein sequence ID" value="CAB96949.1"/>
    <property type="molecule type" value="mRNA"/>
</dbReference>
<dbReference type="EMBL" id="AK001663">
    <property type="protein sequence ID" value="BAA91820.1"/>
    <property type="molecule type" value="mRNA"/>
</dbReference>
<dbReference type="EMBL" id="AK022514">
    <property type="protein sequence ID" value="BAB14071.1"/>
    <property type="molecule type" value="mRNA"/>
</dbReference>
<dbReference type="EMBL" id="AC011488">
    <property type="status" value="NOT_ANNOTATED_CDS"/>
    <property type="molecule type" value="Genomic_DNA"/>
</dbReference>
<dbReference type="EMBL" id="BC093637">
    <property type="protein sequence ID" value="AAH93637.1"/>
    <property type="molecule type" value="mRNA"/>
</dbReference>
<dbReference type="EMBL" id="BC101575">
    <property type="protein sequence ID" value="AAI01576.1"/>
    <property type="molecule type" value="mRNA"/>
</dbReference>
<dbReference type="EMBL" id="BC143329">
    <property type="protein sequence ID" value="AAI43330.1"/>
    <property type="molecule type" value="mRNA"/>
</dbReference>
<dbReference type="CCDS" id="CCDS12115.1">
    <molecule id="Q9NPI5-1"/>
</dbReference>
<dbReference type="CCDS" id="CCDS74259.1">
    <molecule id="Q9NPI5-3"/>
</dbReference>
<dbReference type="RefSeq" id="NP_001276046.1">
    <molecule id="Q9NPI5-3"/>
    <property type="nucleotide sequence ID" value="NM_001289117.2"/>
</dbReference>
<dbReference type="RefSeq" id="NP_733778.1">
    <molecule id="Q9NPI5-1"/>
    <property type="nucleotide sequence ID" value="NM_170678.3"/>
</dbReference>
<dbReference type="RefSeq" id="XP_054176547.1">
    <molecule id="Q9NPI5-1"/>
    <property type="nucleotide sequence ID" value="XM_054320572.1"/>
</dbReference>
<dbReference type="SMR" id="Q9NPI5"/>
<dbReference type="BioGRID" id="118080">
    <property type="interactions" value="5"/>
</dbReference>
<dbReference type="CORUM" id="Q9NPI5"/>
<dbReference type="FunCoup" id="Q9NPI5">
    <property type="interactions" value="911"/>
</dbReference>
<dbReference type="IntAct" id="Q9NPI5">
    <property type="interactions" value="4"/>
</dbReference>
<dbReference type="MINT" id="Q9NPI5"/>
<dbReference type="STRING" id="9606.ENSP00000480091"/>
<dbReference type="iPTMnet" id="Q9NPI5"/>
<dbReference type="PhosphoSitePlus" id="Q9NPI5"/>
<dbReference type="BioMuta" id="NMRK2"/>
<dbReference type="DMDM" id="50401178"/>
<dbReference type="MassIVE" id="Q9NPI5"/>
<dbReference type="PaxDb" id="9606-ENSP00000480091"/>
<dbReference type="PeptideAtlas" id="Q9NPI5"/>
<dbReference type="ProteomicsDB" id="82019">
    <molecule id="Q9NPI5-1"/>
</dbReference>
<dbReference type="Antibodypedia" id="23411">
    <property type="antibodies" value="110 antibodies from 19 providers"/>
</dbReference>
<dbReference type="DNASU" id="27231"/>
<dbReference type="Ensembl" id="ENST00000168977.7">
    <molecule id="Q9NPI5-1"/>
    <property type="protein sequence ID" value="ENSP00000168977.1"/>
    <property type="gene ID" value="ENSG00000077009.14"/>
</dbReference>
<dbReference type="Ensembl" id="ENST00000593949.1">
    <molecule id="Q9NPI5-3"/>
    <property type="protein sequence ID" value="ENSP00000472581.1"/>
    <property type="gene ID" value="ENSG00000077009.14"/>
</dbReference>
<dbReference type="Ensembl" id="ENST00000616156.4">
    <molecule id="Q9NPI5-3"/>
    <property type="protein sequence ID" value="ENSP00000480091.1"/>
    <property type="gene ID" value="ENSG00000077009.14"/>
</dbReference>
<dbReference type="GeneID" id="27231"/>
<dbReference type="KEGG" id="hsa:27231"/>
<dbReference type="MANE-Select" id="ENST00000168977.7">
    <property type="protein sequence ID" value="ENSP00000168977.1"/>
    <property type="RefSeq nucleotide sequence ID" value="NM_170678.3"/>
    <property type="RefSeq protein sequence ID" value="NP_733778.1"/>
</dbReference>
<dbReference type="UCSC" id="uc002lyz.4">
    <molecule id="Q9NPI5-1"/>
    <property type="organism name" value="human"/>
</dbReference>
<dbReference type="AGR" id="HGNC:17871"/>
<dbReference type="CTD" id="27231"/>
<dbReference type="DisGeNET" id="27231"/>
<dbReference type="GeneCards" id="NMRK2"/>
<dbReference type="HGNC" id="HGNC:17871">
    <property type="gene designation" value="NMRK2"/>
</dbReference>
<dbReference type="HPA" id="ENSG00000077009">
    <property type="expression patterns" value="Group enriched (heart muscle, skeletal muscle, tongue)"/>
</dbReference>
<dbReference type="MIM" id="608705">
    <property type="type" value="gene"/>
</dbReference>
<dbReference type="neXtProt" id="NX_Q9NPI5"/>
<dbReference type="OpenTargets" id="ENSG00000077009"/>
<dbReference type="PharmGKB" id="PA134938442"/>
<dbReference type="VEuPathDB" id="HostDB:ENSG00000077009"/>
<dbReference type="eggNOG" id="KOG3308">
    <property type="taxonomic scope" value="Eukaryota"/>
</dbReference>
<dbReference type="GeneTree" id="ENSGT00940000159842"/>
<dbReference type="HOGENOM" id="CLU_058668_0_0_1"/>
<dbReference type="InParanoid" id="Q9NPI5"/>
<dbReference type="OMA" id="MDMEAMT"/>
<dbReference type="OrthoDB" id="10041966at2759"/>
<dbReference type="PAN-GO" id="Q9NPI5">
    <property type="GO annotations" value="2 GO annotations based on evolutionary models"/>
</dbReference>
<dbReference type="PhylomeDB" id="Q9NPI5"/>
<dbReference type="TreeFam" id="TF105395"/>
<dbReference type="BRENDA" id="2.7.1.173">
    <property type="organism ID" value="2681"/>
</dbReference>
<dbReference type="BRENDA" id="2.7.1.22">
    <property type="organism ID" value="2681"/>
</dbReference>
<dbReference type="PathwayCommons" id="Q9NPI5"/>
<dbReference type="Reactome" id="R-HSA-196807">
    <property type="pathway name" value="Nicotinate metabolism"/>
</dbReference>
<dbReference type="SignaLink" id="Q9NPI5"/>
<dbReference type="UniPathway" id="UPA00253"/>
<dbReference type="BioGRID-ORCS" id="27231">
    <property type="hits" value="11 hits in 1145 CRISPR screens"/>
</dbReference>
<dbReference type="ChiTaRS" id="NMRK2">
    <property type="organism name" value="human"/>
</dbReference>
<dbReference type="GeneWiki" id="ITGB1BP3"/>
<dbReference type="GenomeRNAi" id="27231"/>
<dbReference type="Pharos" id="Q9NPI5">
    <property type="development level" value="Tbio"/>
</dbReference>
<dbReference type="PRO" id="PR:Q9NPI5"/>
<dbReference type="Proteomes" id="UP000005640">
    <property type="component" value="Chromosome 19"/>
</dbReference>
<dbReference type="RNAct" id="Q9NPI5">
    <property type="molecule type" value="protein"/>
</dbReference>
<dbReference type="Bgee" id="ENSG00000077009">
    <property type="expression patterns" value="Expressed in apex of heart and 127 other cell types or tissues"/>
</dbReference>
<dbReference type="ExpressionAtlas" id="Q9NPI5">
    <property type="expression patterns" value="baseline and differential"/>
</dbReference>
<dbReference type="GO" id="GO:0005737">
    <property type="term" value="C:cytoplasm"/>
    <property type="evidence" value="ECO:0000318"/>
    <property type="project" value="GO_Central"/>
</dbReference>
<dbReference type="GO" id="GO:0005829">
    <property type="term" value="C:cytosol"/>
    <property type="evidence" value="ECO:0000304"/>
    <property type="project" value="Reactome"/>
</dbReference>
<dbReference type="GO" id="GO:0043231">
    <property type="term" value="C:intracellular membrane-bounded organelle"/>
    <property type="evidence" value="ECO:0000314"/>
    <property type="project" value="HPA"/>
</dbReference>
<dbReference type="GO" id="GO:0005654">
    <property type="term" value="C:nucleoplasm"/>
    <property type="evidence" value="ECO:0000314"/>
    <property type="project" value="HPA"/>
</dbReference>
<dbReference type="GO" id="GO:0005886">
    <property type="term" value="C:plasma membrane"/>
    <property type="evidence" value="ECO:0000314"/>
    <property type="project" value="HPA"/>
</dbReference>
<dbReference type="GO" id="GO:0005524">
    <property type="term" value="F:ATP binding"/>
    <property type="evidence" value="ECO:0007669"/>
    <property type="project" value="UniProtKB-KW"/>
</dbReference>
<dbReference type="GO" id="GO:0046872">
    <property type="term" value="F:metal ion binding"/>
    <property type="evidence" value="ECO:0007669"/>
    <property type="project" value="UniProtKB-KW"/>
</dbReference>
<dbReference type="GO" id="GO:0034317">
    <property type="term" value="F:nicotinate riboside kinase activity"/>
    <property type="evidence" value="ECO:0007669"/>
    <property type="project" value="UniProtKB-EC"/>
</dbReference>
<dbReference type="GO" id="GO:0050262">
    <property type="term" value="F:ribosylnicotinamide kinase activity"/>
    <property type="evidence" value="ECO:0000269"/>
    <property type="project" value="Reactome"/>
</dbReference>
<dbReference type="GO" id="GO:0061769">
    <property type="term" value="F:ribosylnicotinate kinase activity"/>
    <property type="evidence" value="ECO:0000269"/>
    <property type="project" value="Reactome"/>
</dbReference>
<dbReference type="GO" id="GO:0009435">
    <property type="term" value="P:NAD biosynthetic process"/>
    <property type="evidence" value="ECO:0007669"/>
    <property type="project" value="UniProtKB-UniPathway"/>
</dbReference>
<dbReference type="GO" id="GO:0019674">
    <property type="term" value="P:NAD metabolic process"/>
    <property type="evidence" value="ECO:0000304"/>
    <property type="project" value="Reactome"/>
</dbReference>
<dbReference type="GO" id="GO:0045662">
    <property type="term" value="P:negative regulation of myoblast differentiation"/>
    <property type="evidence" value="ECO:0007669"/>
    <property type="project" value="Ensembl"/>
</dbReference>
<dbReference type="CDD" id="cd02024">
    <property type="entry name" value="NRK1"/>
    <property type="match status" value="1"/>
</dbReference>
<dbReference type="FunFam" id="3.40.50.300:FF:000853">
    <property type="entry name" value="Nicotinamide riboside kinase 1"/>
    <property type="match status" value="1"/>
</dbReference>
<dbReference type="Gene3D" id="3.40.50.300">
    <property type="entry name" value="P-loop containing nucleotide triphosphate hydrolases"/>
    <property type="match status" value="1"/>
</dbReference>
<dbReference type="InterPro" id="IPR027417">
    <property type="entry name" value="P-loop_NTPase"/>
</dbReference>
<dbReference type="PANTHER" id="PTHR10285">
    <property type="entry name" value="URIDINE KINASE"/>
    <property type="match status" value="1"/>
</dbReference>
<dbReference type="Pfam" id="PF13238">
    <property type="entry name" value="AAA_18"/>
    <property type="match status" value="1"/>
</dbReference>
<dbReference type="SUPFAM" id="SSF52540">
    <property type="entry name" value="P-loop containing nucleoside triphosphate hydrolases"/>
    <property type="match status" value="1"/>
</dbReference>
<reference key="1">
    <citation type="journal article" date="1999" name="J. Cell Biol.">
        <title>A novel muscle-specific beta 1 integrin binding protein (MIBP) that modulates myogenic differentiation.</title>
        <authorList>
            <person name="Li J."/>
            <person name="Mayne R."/>
            <person name="Wu C."/>
        </authorList>
    </citation>
    <scope>NUCLEOTIDE SEQUENCE [MRNA] (ISOFORM 1)</scope>
    <scope>FUNCTION</scope>
    <scope>TISSUE SPECIFICITY</scope>
    <scope>INTERACTION WITH ITGB1</scope>
    <source>
        <tissue>Heart</tissue>
    </source>
</reference>
<reference key="2">
    <citation type="journal article" date="2004" name="Cell">
        <title>Discoveries of nicotinamide riboside as a nutrient and conserved NRK genes establish a Preiss-Handler independent route to NAD+ in fungi and humans.</title>
        <authorList>
            <person name="Bieganowski P."/>
            <person name="Brenner C."/>
        </authorList>
    </citation>
    <scope>NUCLEOTIDE SEQUENCE [MRNA] (ISOFORM 1)</scope>
    <scope>FUNCTION</scope>
</reference>
<reference key="3">
    <citation type="submission" date="2000-07" db="EMBL/GenBank/DDBJ databases">
        <authorList>
            <consortium name="The European IMAGE consortium"/>
        </authorList>
    </citation>
    <scope>NUCLEOTIDE SEQUENCE [LARGE SCALE MRNA] (ISOFORM 1)</scope>
</reference>
<reference key="4">
    <citation type="journal article" date="2004" name="Nat. Genet.">
        <title>Complete sequencing and characterization of 21,243 full-length human cDNAs.</title>
        <authorList>
            <person name="Ota T."/>
            <person name="Suzuki Y."/>
            <person name="Nishikawa T."/>
            <person name="Otsuki T."/>
            <person name="Sugiyama T."/>
            <person name="Irie R."/>
            <person name="Wakamatsu A."/>
            <person name="Hayashi K."/>
            <person name="Sato H."/>
            <person name="Nagai K."/>
            <person name="Kimura K."/>
            <person name="Makita H."/>
            <person name="Sekine M."/>
            <person name="Obayashi M."/>
            <person name="Nishi T."/>
            <person name="Shibahara T."/>
            <person name="Tanaka T."/>
            <person name="Ishii S."/>
            <person name="Yamamoto J."/>
            <person name="Saito K."/>
            <person name="Kawai Y."/>
            <person name="Isono Y."/>
            <person name="Nakamura Y."/>
            <person name="Nagahari K."/>
            <person name="Murakami K."/>
            <person name="Yasuda T."/>
            <person name="Iwayanagi T."/>
            <person name="Wagatsuma M."/>
            <person name="Shiratori A."/>
            <person name="Sudo H."/>
            <person name="Hosoiri T."/>
            <person name="Kaku Y."/>
            <person name="Kodaira H."/>
            <person name="Kondo H."/>
            <person name="Sugawara M."/>
            <person name="Takahashi M."/>
            <person name="Kanda K."/>
            <person name="Yokoi T."/>
            <person name="Furuya T."/>
            <person name="Kikkawa E."/>
            <person name="Omura Y."/>
            <person name="Abe K."/>
            <person name="Kamihara K."/>
            <person name="Katsuta N."/>
            <person name="Sato K."/>
            <person name="Tanikawa M."/>
            <person name="Yamazaki M."/>
            <person name="Ninomiya K."/>
            <person name="Ishibashi T."/>
            <person name="Yamashita H."/>
            <person name="Murakawa K."/>
            <person name="Fujimori K."/>
            <person name="Tanai H."/>
            <person name="Kimata M."/>
            <person name="Watanabe M."/>
            <person name="Hiraoka S."/>
            <person name="Chiba Y."/>
            <person name="Ishida S."/>
            <person name="Ono Y."/>
            <person name="Takiguchi S."/>
            <person name="Watanabe S."/>
            <person name="Yosida M."/>
            <person name="Hotuta T."/>
            <person name="Kusano J."/>
            <person name="Kanehori K."/>
            <person name="Takahashi-Fujii A."/>
            <person name="Hara H."/>
            <person name="Tanase T.-O."/>
            <person name="Nomura Y."/>
            <person name="Togiya S."/>
            <person name="Komai F."/>
            <person name="Hara R."/>
            <person name="Takeuchi K."/>
            <person name="Arita M."/>
            <person name="Imose N."/>
            <person name="Musashino K."/>
            <person name="Yuuki H."/>
            <person name="Oshima A."/>
            <person name="Sasaki N."/>
            <person name="Aotsuka S."/>
            <person name="Yoshikawa Y."/>
            <person name="Matsunawa H."/>
            <person name="Ichihara T."/>
            <person name="Shiohata N."/>
            <person name="Sano S."/>
            <person name="Moriya S."/>
            <person name="Momiyama H."/>
            <person name="Satoh N."/>
            <person name="Takami S."/>
            <person name="Terashima Y."/>
            <person name="Suzuki O."/>
            <person name="Nakagawa S."/>
            <person name="Senoh A."/>
            <person name="Mizoguchi H."/>
            <person name="Goto Y."/>
            <person name="Shimizu F."/>
            <person name="Wakebe H."/>
            <person name="Hishigaki H."/>
            <person name="Watanabe T."/>
            <person name="Sugiyama A."/>
            <person name="Takemoto M."/>
            <person name="Kawakami B."/>
            <person name="Yamazaki M."/>
            <person name="Watanabe K."/>
            <person name="Kumagai A."/>
            <person name="Itakura S."/>
            <person name="Fukuzumi Y."/>
            <person name="Fujimori Y."/>
            <person name="Komiyama M."/>
            <person name="Tashiro H."/>
            <person name="Tanigami A."/>
            <person name="Fujiwara T."/>
            <person name="Ono T."/>
            <person name="Yamada K."/>
            <person name="Fujii Y."/>
            <person name="Ozaki K."/>
            <person name="Hirao M."/>
            <person name="Ohmori Y."/>
            <person name="Kawabata A."/>
            <person name="Hikiji T."/>
            <person name="Kobatake N."/>
            <person name="Inagaki H."/>
            <person name="Ikema Y."/>
            <person name="Okamoto S."/>
            <person name="Okitani R."/>
            <person name="Kawakami T."/>
            <person name="Noguchi S."/>
            <person name="Itoh T."/>
            <person name="Shigeta K."/>
            <person name="Senba T."/>
            <person name="Matsumura K."/>
            <person name="Nakajima Y."/>
            <person name="Mizuno T."/>
            <person name="Morinaga M."/>
            <person name="Sasaki M."/>
            <person name="Togashi T."/>
            <person name="Oyama M."/>
            <person name="Hata H."/>
            <person name="Watanabe M."/>
            <person name="Komatsu T."/>
            <person name="Mizushima-Sugano J."/>
            <person name="Satoh T."/>
            <person name="Shirai Y."/>
            <person name="Takahashi Y."/>
            <person name="Nakagawa K."/>
            <person name="Okumura K."/>
            <person name="Nagase T."/>
            <person name="Nomura N."/>
            <person name="Kikuchi H."/>
            <person name="Masuho Y."/>
            <person name="Yamashita R."/>
            <person name="Nakai K."/>
            <person name="Yada T."/>
            <person name="Nakamura Y."/>
            <person name="Ohara O."/>
            <person name="Isogai T."/>
            <person name="Sugano S."/>
        </authorList>
    </citation>
    <scope>NUCLEOTIDE SEQUENCE [LARGE SCALE MRNA] (ISOFORM 1)</scope>
    <source>
        <tissue>Teratocarcinoma</tissue>
    </source>
</reference>
<reference key="5">
    <citation type="journal article" date="2004" name="Nature">
        <title>The DNA sequence and biology of human chromosome 19.</title>
        <authorList>
            <person name="Grimwood J."/>
            <person name="Gordon L.A."/>
            <person name="Olsen A.S."/>
            <person name="Terry A."/>
            <person name="Schmutz J."/>
            <person name="Lamerdin J.E."/>
            <person name="Hellsten U."/>
            <person name="Goodstein D."/>
            <person name="Couronne O."/>
            <person name="Tran-Gyamfi M."/>
            <person name="Aerts A."/>
            <person name="Altherr M."/>
            <person name="Ashworth L."/>
            <person name="Bajorek E."/>
            <person name="Black S."/>
            <person name="Branscomb E."/>
            <person name="Caenepeel S."/>
            <person name="Carrano A.V."/>
            <person name="Caoile C."/>
            <person name="Chan Y.M."/>
            <person name="Christensen M."/>
            <person name="Cleland C.A."/>
            <person name="Copeland A."/>
            <person name="Dalin E."/>
            <person name="Dehal P."/>
            <person name="Denys M."/>
            <person name="Detter J.C."/>
            <person name="Escobar J."/>
            <person name="Flowers D."/>
            <person name="Fotopulos D."/>
            <person name="Garcia C."/>
            <person name="Georgescu A.M."/>
            <person name="Glavina T."/>
            <person name="Gomez M."/>
            <person name="Gonzales E."/>
            <person name="Groza M."/>
            <person name="Hammon N."/>
            <person name="Hawkins T."/>
            <person name="Haydu L."/>
            <person name="Ho I."/>
            <person name="Huang W."/>
            <person name="Israni S."/>
            <person name="Jett J."/>
            <person name="Kadner K."/>
            <person name="Kimball H."/>
            <person name="Kobayashi A."/>
            <person name="Larionov V."/>
            <person name="Leem S.-H."/>
            <person name="Lopez F."/>
            <person name="Lou Y."/>
            <person name="Lowry S."/>
            <person name="Malfatti S."/>
            <person name="Martinez D."/>
            <person name="McCready P.M."/>
            <person name="Medina C."/>
            <person name="Morgan J."/>
            <person name="Nelson K."/>
            <person name="Nolan M."/>
            <person name="Ovcharenko I."/>
            <person name="Pitluck S."/>
            <person name="Pollard M."/>
            <person name="Popkie A.P."/>
            <person name="Predki P."/>
            <person name="Quan G."/>
            <person name="Ramirez L."/>
            <person name="Rash S."/>
            <person name="Retterer J."/>
            <person name="Rodriguez A."/>
            <person name="Rogers S."/>
            <person name="Salamov A."/>
            <person name="Salazar A."/>
            <person name="She X."/>
            <person name="Smith D."/>
            <person name="Slezak T."/>
            <person name="Solovyev V."/>
            <person name="Thayer N."/>
            <person name="Tice H."/>
            <person name="Tsai M."/>
            <person name="Ustaszewska A."/>
            <person name="Vo N."/>
            <person name="Wagner M."/>
            <person name="Wheeler J."/>
            <person name="Wu K."/>
            <person name="Xie G."/>
            <person name="Yang J."/>
            <person name="Dubchak I."/>
            <person name="Furey T.S."/>
            <person name="DeJong P."/>
            <person name="Dickson M."/>
            <person name="Gordon D."/>
            <person name="Eichler E.E."/>
            <person name="Pennacchio L.A."/>
            <person name="Richardson P."/>
            <person name="Stubbs L."/>
            <person name="Rokhsar D.S."/>
            <person name="Myers R.M."/>
            <person name="Rubin E.M."/>
            <person name="Lucas S.M."/>
        </authorList>
    </citation>
    <scope>NUCLEOTIDE SEQUENCE [LARGE SCALE GENOMIC DNA]</scope>
</reference>
<reference key="6">
    <citation type="journal article" date="2004" name="Genome Res.">
        <title>The status, quality, and expansion of the NIH full-length cDNA project: the Mammalian Gene Collection (MGC).</title>
        <authorList>
            <consortium name="The MGC Project Team"/>
        </authorList>
    </citation>
    <scope>NUCLEOTIDE SEQUENCE [LARGE SCALE MRNA] (ISOFORMS 1 AND 2)</scope>
    <source>
        <tissue>Liver</tissue>
    </source>
</reference>
<reference key="7">
    <citation type="journal article" date="2003" name="Dev. Biol.">
        <title>The muscle integrin binding protein (MIBP) interacts with alpha7beta1 integrin and regulates cell adhesion and laminin matrix deposition.</title>
        <authorList>
            <person name="Li J."/>
            <person name="Rao H."/>
            <person name="Burkin D."/>
            <person name="Kaufman S.J."/>
            <person name="Wu C."/>
        </authorList>
    </citation>
    <scope>INTERACTION WITH INTEGRIN ALPHA-7/BETA-1</scope>
</reference>
<reference key="8">
    <citation type="journal article" date="2007" name="PLoS Biol.">
        <title>Nicotinamide riboside kinase structures reveal new pathways to NAD+.</title>
        <authorList>
            <person name="Tempel W."/>
            <person name="Rabeh W.M."/>
            <person name="Bogan K.L."/>
            <person name="Belenky P."/>
            <person name="Wojcik M."/>
            <person name="Seidle H.F."/>
            <person name="Nedyalkova L."/>
            <person name="Yang T."/>
            <person name="Sauve A.A."/>
            <person name="Park H.-W."/>
            <person name="Brenner C."/>
        </authorList>
    </citation>
    <scope>SUBSTRATE SPECIFICITY</scope>
    <scope>BIOPHYSICOCHEMICAL PROPERTIES</scope>
    <scope>CATALYTIC ACTIVITY</scope>
    <scope>MUTAGENESIS OF ASP-35 AND GLU-100</scope>
</reference>
<name>NRK2_HUMAN</name>
<evidence type="ECO:0000250" key="1"/>
<evidence type="ECO:0000250" key="2">
    <source>
        <dbReference type="UniProtKB" id="Q9NWW6"/>
    </source>
</evidence>
<evidence type="ECO:0000256" key="3">
    <source>
        <dbReference type="SAM" id="MobiDB-lite"/>
    </source>
</evidence>
<evidence type="ECO:0000269" key="4">
    <source>
    </source>
</evidence>
<evidence type="ECO:0000269" key="5">
    <source>
    </source>
</evidence>
<evidence type="ECO:0000269" key="6">
    <source>
    </source>
</evidence>
<evidence type="ECO:0000269" key="7">
    <source>
    </source>
</evidence>
<evidence type="ECO:0000303" key="8">
    <source>
    </source>
</evidence>
<evidence type="ECO:0000305" key="9"/>
<evidence type="ECO:0000305" key="10">
    <source>
    </source>
</evidence>
<gene>
    <name type="primary">NMRK2</name>
    <name type="synonym">ITGB1BP3</name>
    <name type="synonym">NRK2</name>
</gene>
<proteinExistence type="evidence at protein level"/>
<comment type="function">
    <text evidence="4 6">Catalyzes the phosphorylation of nicotinamide riboside (NR) and nicotinic acid riboside (NaR) to form nicotinamide mononucleotide (NMN) and nicotinic acid mononucleotide (NaMN). Reduces laminin matrix deposition and cell adhesion to laminin, but not to fibronectin. Involved in the regulation of PXN at the protein level and of PXN tyrosine phosphorylation. May play a role in the regulation of terminal myogenesis.</text>
</comment>
<comment type="catalytic activity">
    <reaction evidence="7">
        <text>beta-nicotinamide D-riboside + ATP = beta-nicotinamide D-ribonucleotide + ADP + H(+)</text>
        <dbReference type="Rhea" id="RHEA:14017"/>
        <dbReference type="ChEBI" id="CHEBI:14649"/>
        <dbReference type="ChEBI" id="CHEBI:15378"/>
        <dbReference type="ChEBI" id="CHEBI:15927"/>
        <dbReference type="ChEBI" id="CHEBI:30616"/>
        <dbReference type="ChEBI" id="CHEBI:456216"/>
        <dbReference type="EC" id="2.7.1.22"/>
    </reaction>
</comment>
<comment type="catalytic activity">
    <reaction evidence="7">
        <text>beta-D-ribosylnicotinate + ATP = nicotinate beta-D-ribonucleotide + ADP + H(+)</text>
        <dbReference type="Rhea" id="RHEA:25568"/>
        <dbReference type="ChEBI" id="CHEBI:15378"/>
        <dbReference type="ChEBI" id="CHEBI:30616"/>
        <dbReference type="ChEBI" id="CHEBI:57502"/>
        <dbReference type="ChEBI" id="CHEBI:58527"/>
        <dbReference type="ChEBI" id="CHEBI:456216"/>
        <dbReference type="EC" id="2.7.1.173"/>
    </reaction>
</comment>
<comment type="biophysicochemical properties">
    <kinetics>
        <KM evidence="7">0.19 mM for nicotinamide riboside (with ATP as cosubstrate)</KM>
        <KM evidence="7">30 mM for nicotinamide riboside (with GTP as cosubstrate)</KM>
        <KM evidence="7">0.11 mM for tiazofurin (with ATP as cosubstrate)</KM>
        <KM evidence="7">0.063 mM for nicotinic acid riboside (with ATP as cosubstrate)</KM>
        <KM evidence="7">1.3 mM for uridine (with ATP as cosubstrate)</KM>
    </kinetics>
</comment>
<comment type="pathway">
    <text evidence="10">Cofactor biosynthesis; NAD(+) biosynthesis.</text>
</comment>
<comment type="subunit">
    <text evidence="1 4 5">Monomer (By similarity). Interacts with ITGB1 alone or when associated with alpha-7, but not with alpha-5.</text>
</comment>
<comment type="interaction">
    <interactant intactId="EBI-514059">
        <id>Q9NPI5</id>
    </interactant>
    <interactant intactId="EBI-296693">
        <id>Q9Y561</id>
        <label>LRP12</label>
    </interactant>
    <organismsDiffer>false</organismsDiffer>
    <experiments>2</experiments>
</comment>
<comment type="alternative products">
    <event type="alternative splicing"/>
    <isoform>
        <id>Q9NPI5-1</id>
        <name>1</name>
        <sequence type="displayed"/>
    </isoform>
    <isoform>
        <id>Q9NPI5-3</id>
        <name>2</name>
        <sequence type="described" ref="VSP_054332"/>
    </isoform>
</comment>
<comment type="tissue specificity">
    <text evidence="4">Predominantly expressed in skeletal muscle and, at a much lower level, in the heart (at protein level). No expression in brain, kidney, liver, lung, pancreas nor placenta.</text>
</comment>
<comment type="induction">
    <text evidence="1">Down-regulated during myoblast differentiation.</text>
</comment>
<comment type="similarity">
    <text evidence="9">Belongs to the uridine kinase family. NRK subfamily.</text>
</comment>
<comment type="sequence caution" evidence="9">
    <conflict type="miscellaneous discrepancy">
        <sequence resource="EMBL-CDS" id="AAF26711"/>
    </conflict>
    <text>Aberrant splicing.</text>
</comment>
<accession>Q9NPI5</accession>
<accession>B7ZKR3</accession>
<accession>Q52M81</accession>
<accession>Q9NZK3</accession>
<organism>
    <name type="scientific">Homo sapiens</name>
    <name type="common">Human</name>
    <dbReference type="NCBI Taxonomy" id="9606"/>
    <lineage>
        <taxon>Eukaryota</taxon>
        <taxon>Metazoa</taxon>
        <taxon>Chordata</taxon>
        <taxon>Craniata</taxon>
        <taxon>Vertebrata</taxon>
        <taxon>Euteleostomi</taxon>
        <taxon>Mammalia</taxon>
        <taxon>Eutheria</taxon>
        <taxon>Euarchontoglires</taxon>
        <taxon>Primates</taxon>
        <taxon>Haplorrhini</taxon>
        <taxon>Catarrhini</taxon>
        <taxon>Hominidae</taxon>
        <taxon>Homo</taxon>
    </lineage>
</organism>
<protein>
    <recommendedName>
        <fullName>Nicotinamide riboside kinase 2</fullName>
        <shortName>NRK 2</shortName>
        <shortName>NmR-K 2</shortName>
        <ecNumber evidence="7">2.7.1.22</ecNumber>
    </recommendedName>
    <alternativeName>
        <fullName>Integrin beta-1-binding protein 3</fullName>
    </alternativeName>
    <alternativeName>
        <fullName>Muscle integrin-binding protein</fullName>
        <shortName>MIBP</shortName>
    </alternativeName>
    <alternativeName>
        <fullName>Nicotinic acid riboside kinase 2</fullName>
        <ecNumber evidence="7">2.7.1.173</ecNumber>
    </alternativeName>
    <alternativeName>
        <fullName>Ribosylnicotinamide kinase 2</fullName>
        <shortName>RNK 2</shortName>
    </alternativeName>
    <alternativeName>
        <fullName>Ribosylnicotinic acid kinase 2</fullName>
    </alternativeName>
</protein>
<feature type="chain" id="PRO_0000215894" description="Nicotinamide riboside kinase 2">
    <location>
        <begin position="1"/>
        <end position="230"/>
    </location>
</feature>
<feature type="region of interest" description="Disordered" evidence="3">
    <location>
        <begin position="191"/>
        <end position="230"/>
    </location>
</feature>
<feature type="active site" description="Proton acceptor" evidence="2">
    <location>
        <position position="35"/>
    </location>
</feature>
<feature type="binding site" evidence="2">
    <location>
        <begin position="9"/>
        <end position="17"/>
    </location>
    <ligand>
        <name>ATP</name>
        <dbReference type="ChEBI" id="CHEBI:30616"/>
    </ligand>
</feature>
<feature type="binding site" evidence="2">
    <location>
        <position position="16"/>
    </location>
    <ligand>
        <name>Mg(2+)</name>
        <dbReference type="ChEBI" id="CHEBI:18420"/>
    </ligand>
</feature>
<feature type="binding site" evidence="2">
    <location>
        <begin position="35"/>
        <end position="38"/>
    </location>
    <ligand>
        <name>substrate</name>
    </ligand>
</feature>
<feature type="binding site" evidence="2">
    <location>
        <position position="35"/>
    </location>
    <ligand>
        <name>Mg(2+)</name>
        <dbReference type="ChEBI" id="CHEBI:18420"/>
    </ligand>
</feature>
<feature type="binding site" evidence="2">
    <location>
        <begin position="54"/>
        <end position="55"/>
    </location>
    <ligand>
        <name>substrate</name>
    </ligand>
</feature>
<feature type="binding site" evidence="2">
    <location>
        <position position="130"/>
    </location>
    <ligand>
        <name>ATP</name>
        <dbReference type="ChEBI" id="CHEBI:30616"/>
    </ligand>
</feature>
<feature type="binding site" evidence="2">
    <location>
        <position position="131"/>
    </location>
    <ligand>
        <name>substrate</name>
    </ligand>
</feature>
<feature type="binding site" evidence="2">
    <location>
        <begin position="134"/>
        <end position="136"/>
    </location>
    <ligand>
        <name>ATP</name>
        <dbReference type="ChEBI" id="CHEBI:30616"/>
    </ligand>
</feature>
<feature type="binding site" evidence="2">
    <location>
        <begin position="136"/>
        <end position="137"/>
    </location>
    <ligand>
        <name>substrate</name>
    </ligand>
</feature>
<feature type="binding site" evidence="2">
    <location>
        <begin position="174"/>
        <end position="176"/>
    </location>
    <ligand>
        <name>ATP</name>
        <dbReference type="ChEBI" id="CHEBI:30616"/>
    </ligand>
</feature>
<feature type="splice variant" id="VSP_054332" description="In isoform 2." evidence="8">
    <original>K</original>
    <variation>KAPLFQ</variation>
    <location>
        <position position="39"/>
    </location>
</feature>
<feature type="sequence variant" id="VAR_024549" description="In dbSNP:rs16992131.">
    <original>E</original>
    <variation>K</variation>
    <location>
        <position position="178"/>
    </location>
</feature>
<feature type="mutagenesis site" description="Loss of activity." evidence="7">
    <original>D</original>
    <variation>A</variation>
    <location>
        <position position="35"/>
    </location>
</feature>
<feature type="mutagenesis site" description="Loss of activity." evidence="7">
    <original>E</original>
    <variation>A</variation>
    <location>
        <position position="100"/>
    </location>
</feature>